<reference key="1">
    <citation type="journal article" date="1990" name="Nucleic Acids Res.">
        <title>Cloning of cDNA encoding the complete precursor for bovine seminal ribonuclease.</title>
        <authorList>
            <person name="Preuss K.D."/>
            <person name="Wagner S."/>
            <person name="Freudenstein J."/>
            <person name="Scheit K.H."/>
        </authorList>
    </citation>
    <scope>NUCLEOTIDE SEQUENCE [MRNA]</scope>
</reference>
<reference key="2">
    <citation type="submission" date="1997-07" db="EMBL/GenBank/DDBJ databases">
        <authorList>
            <person name="Sasso M.P."/>
            <person name="Lombardi M."/>
            <person name="Confalone E."/>
            <person name="Carsana A."/>
            <person name="Palmieri M."/>
            <person name="Furia A."/>
        </authorList>
    </citation>
    <scope>NUCLEOTIDE SEQUENCE</scope>
</reference>
<reference key="3">
    <citation type="journal article" date="1995" name="J. Mol. Evol.">
        <title>Molecular evolution of genes encoding ribonucleases in ruminant species.</title>
        <authorList>
            <person name="Confalone E."/>
            <person name="Beintema J.J."/>
            <person name="Sasso M.P."/>
            <person name="Carsana A."/>
            <person name="Palmieri M."/>
            <person name="Vento M.T."/>
            <person name="Furia A."/>
        </authorList>
    </citation>
    <scope>NUCLEOTIDE SEQUENCE OF 27-150</scope>
</reference>
<reference key="4">
    <citation type="journal article" date="1972" name="Acta Vitaminol. Enzymol.">
        <title>Primary structure of seminal ribonuclease (RNAase BS-1).</title>
        <authorList>
            <person name="Suzuki H."/>
            <person name="Greco L."/>
            <person name="Parente A."/>
            <person name="Farina B."/>
            <person name="la Montagna R."/>
            <person name="Leone E."/>
        </authorList>
    </citation>
    <scope>PROTEIN SEQUENCE OF 27-150</scope>
</reference>
<reference key="5">
    <citation type="journal article" date="1985" name="Eur. J. Biochem.">
        <title>Sequence analysis of a cloned cDNA coding for bovine seminal ribonuclease.</title>
        <authorList>
            <person name="Palmieri M."/>
            <person name="Carsana A."/>
            <person name="Furia A."/>
            <person name="Libonati M."/>
        </authorList>
    </citation>
    <scope>NUCLEOTIDE SEQUENCE [MRNA] OF 73-150</scope>
</reference>
<reference key="6">
    <citation type="journal article" date="1983" name="Anal. Biochem.">
        <title>Isolation of bovine seminal ribonuclease by affinity chromatography.</title>
        <authorList>
            <person name="Krietsch W.K.G."/>
            <person name="Simm F.C."/>
            <person name="Hertenberger B."/>
            <person name="Kuntz G.W.K."/>
            <person name="Wachter E."/>
        </authorList>
    </citation>
    <scope>SEQUENCE REVISION TO 43</scope>
</reference>
<reference key="7">
    <citation type="journal article" date="1973" name="Biochem. Biophys. Res. Commun.">
        <title>Interchain disulfide bridges in ribonuclease BS-1.</title>
        <authorList>
            <person name="di Donato A."/>
            <person name="D'Alessio G."/>
        </authorList>
    </citation>
    <scope>INTERCHAIN DISULFIDE BONDS</scope>
</reference>
<reference key="8">
    <citation type="journal article" date="1979" name="Biochim. Biophys. Acta">
        <title>Intrachain disulfide bridges of bovine seminal ribonuclease.</title>
        <authorList>
            <person name="di Donato A."/>
            <person name="D'Alessio G."/>
        </authorList>
    </citation>
    <scope>INTRACHAIN DISULFIDE BONDS</scope>
</reference>
<reference key="9">
    <citation type="journal article" date="1981" name="Biochemistry">
        <title>Heterogeneity of bovine seminal ribonuclease.</title>
        <authorList>
            <person name="di Donato A."/>
            <person name="D'Alessio G."/>
        </authorList>
    </citation>
    <scope>MULTIPLE FORMS</scope>
</reference>
<reference key="10">
    <citation type="journal article" date="1972" name="FEBS Lett.">
        <title>Dimeric structure of seminal ribonuclease.</title>
        <authorList>
            <person name="D'Alessio G."/>
            <person name="Parente A."/>
            <person name="Guida C."/>
            <person name="Leone E."/>
        </authorList>
    </citation>
    <scope>CATALYTIC ACTIVITY</scope>
</reference>
<reference key="11">
    <citation type="journal article" date="1991" name="Trends Biochem. Sci.">
        <title>Seminal RNase: a unique member of the ribonuclease superfamily.</title>
        <authorList>
            <person name="D'Alessio G."/>
            <person name="di Donato A."/>
            <person name="Parente A."/>
            <person name="Piccoli R."/>
        </authorList>
    </citation>
    <scope>REVIEW</scope>
    <scope>DEAMIDATION AT ASN-93</scope>
</reference>
<reference key="12">
    <citation type="journal article" date="1983" name="Biopolymers">
        <title>Refinement of the structure of bovine seminal ribonuclease.</title>
        <authorList>
            <person name="Capasso S."/>
            <person name="Giordano F."/>
            <person name="Mattia C.A."/>
            <person name="Mazzarella L."/>
            <person name="Zagari A."/>
        </authorList>
    </citation>
    <scope>X-RAY CRYSTALLOGRAPHY (2.5 ANGSTROMS)</scope>
</reference>
<reference key="13">
    <citation type="journal article" date="1993" name="Acta Crystallogr. D">
        <title>Bovine seminal ribonuclease: structure at 1.9-A resolution.</title>
        <authorList>
            <person name="Mazzarella L."/>
            <person name="Capasso S."/>
            <person name="Demasi D."/>
            <person name="di Lorenzo G."/>
            <person name="Mattia C.A."/>
            <person name="Zagari A."/>
        </authorList>
    </citation>
    <scope>X-RAY CRYSTALLOGRAPHY (1.9 ANGSTROMS)</scope>
</reference>
<reference key="14">
    <citation type="journal article" date="1995" name="Proc. Natl. Acad. Sci. U.S.A.">
        <title>Swapping structural determinants of ribonucleases: an energetic analysis of the hinge peptide 16-22.</title>
        <authorList>
            <person name="Mazzarella K."/>
            <person name="Vitagliano L."/>
            <person name="Zagari A."/>
        </authorList>
    </citation>
    <scope>X-RAY CRYSTALLOGRAPHY (1.45 ANGSTROMS)</scope>
</reference>
<reference key="15">
    <citation type="journal article" date="1998" name="Protein Sci.">
        <title>Binding of a substrate analog to a domain swapping protein: X-ray structure of the complex of bovine seminal ribonuclease with uridylyl(2',5')adenosine.</title>
        <authorList>
            <person name="Vitagliano L."/>
            <person name="Adinolfi S."/>
            <person name="Riccio A."/>
            <person name="Sica F."/>
            <person name="Zagari A."/>
            <person name="Mazzarella L."/>
        </authorList>
    </citation>
    <scope>X-RAY CRYSTALLOGRAPHY (2.06 ANGSTROMS)</scope>
</reference>
<evidence type="ECO:0000269" key="1">
    <source>
    </source>
</evidence>
<evidence type="ECO:0000269" key="2">
    <source>
    </source>
</evidence>
<evidence type="ECO:0000269" key="3">
    <source ref="4"/>
</evidence>
<evidence type="ECO:0000305" key="4"/>
<evidence type="ECO:0007829" key="5">
    <source>
        <dbReference type="PDB" id="1N1X"/>
    </source>
</evidence>
<evidence type="ECO:0007829" key="6">
    <source>
        <dbReference type="PDB" id="3DJQ"/>
    </source>
</evidence>
<evidence type="ECO:0007829" key="7">
    <source>
        <dbReference type="PDB" id="4N4C"/>
    </source>
</evidence>
<keyword id="KW-0002">3D-structure</keyword>
<keyword id="KW-0021">Allosteric enzyme</keyword>
<keyword id="KW-0903">Direct protein sequencing</keyword>
<keyword id="KW-1015">Disulfide bond</keyword>
<keyword id="KW-0255">Endonuclease</keyword>
<keyword id="KW-0378">Hydrolase</keyword>
<keyword id="KW-0456">Lyase</keyword>
<keyword id="KW-0540">Nuclease</keyword>
<keyword id="KW-1185">Reference proteome</keyword>
<keyword id="KW-0964">Secreted</keyword>
<keyword id="KW-0732">Signal</keyword>
<dbReference type="EC" id="4.6.1.18" evidence="2"/>
<dbReference type="EMBL" id="X51337">
    <property type="protein sequence ID" value="CAA35716.1"/>
    <property type="molecule type" value="mRNA"/>
</dbReference>
<dbReference type="EMBL" id="AJ000518">
    <property type="protein sequence ID" value="CAA04155.1"/>
    <property type="molecule type" value="Genomic_DNA"/>
</dbReference>
<dbReference type="EMBL" id="S81747">
    <property type="protein sequence ID" value="AAB36140.1"/>
    <property type="molecule type" value="Genomic_DNA"/>
</dbReference>
<dbReference type="EMBL" id="X03029">
    <property type="protein sequence ID" value="CAA26832.1"/>
    <property type="molecule type" value="mRNA"/>
</dbReference>
<dbReference type="PIR" id="S08392">
    <property type="entry name" value="NRBOS"/>
</dbReference>
<dbReference type="RefSeq" id="NP_861526.1">
    <property type="nucleotide sequence ID" value="NM_181810.1"/>
</dbReference>
<dbReference type="PDB" id="11BA">
    <property type="method" value="X-ray"/>
    <property type="resolution" value="2.06 A"/>
    <property type="chains" value="A/B=27-150"/>
</dbReference>
<dbReference type="PDB" id="11BG">
    <property type="method" value="X-ray"/>
    <property type="resolution" value="1.90 A"/>
    <property type="chains" value="A/B=27-150"/>
</dbReference>
<dbReference type="PDB" id="1BSR">
    <property type="method" value="X-ray"/>
    <property type="resolution" value="1.90 A"/>
    <property type="chains" value="A/B=27-150"/>
</dbReference>
<dbReference type="PDB" id="1N1X">
    <property type="method" value="X-ray"/>
    <property type="resolution" value="1.45 A"/>
    <property type="chains" value="A=27-150"/>
</dbReference>
<dbReference type="PDB" id="1N3Z">
    <property type="method" value="X-ray"/>
    <property type="resolution" value="1.65 A"/>
    <property type="chains" value="A=27-150"/>
</dbReference>
<dbReference type="PDB" id="1QWQ">
    <property type="method" value="NMR"/>
    <property type="chains" value="A=27-150"/>
</dbReference>
<dbReference type="PDB" id="1R3M">
    <property type="method" value="X-ray"/>
    <property type="resolution" value="2.20 A"/>
    <property type="chains" value="A/B=27-150"/>
</dbReference>
<dbReference type="PDB" id="1R5C">
    <property type="method" value="X-ray"/>
    <property type="resolution" value="2.10 A"/>
    <property type="chains" value="A/B=27-150"/>
</dbReference>
<dbReference type="PDB" id="1R5D">
    <property type="method" value="X-ray"/>
    <property type="resolution" value="2.50 A"/>
    <property type="chains" value="A/B=27-150"/>
</dbReference>
<dbReference type="PDB" id="1TQ9">
    <property type="method" value="X-ray"/>
    <property type="resolution" value="2.00 A"/>
    <property type="chains" value="A/B=27-150"/>
</dbReference>
<dbReference type="PDB" id="1Y92">
    <property type="method" value="X-ray"/>
    <property type="resolution" value="2.20 A"/>
    <property type="chains" value="A/B=27-150"/>
</dbReference>
<dbReference type="PDB" id="1Y94">
    <property type="method" value="X-ray"/>
    <property type="resolution" value="2.20 A"/>
    <property type="chains" value="A/B=27-150"/>
</dbReference>
<dbReference type="PDB" id="2LFJ">
    <property type="method" value="NMR"/>
    <property type="chains" value="A=27-150"/>
</dbReference>
<dbReference type="PDB" id="3BCM">
    <property type="method" value="X-ray"/>
    <property type="resolution" value="2.25 A"/>
    <property type="chains" value="A/B=27-150"/>
</dbReference>
<dbReference type="PDB" id="3BCO">
    <property type="method" value="X-ray"/>
    <property type="resolution" value="2.25 A"/>
    <property type="chains" value="A/B=27-150"/>
</dbReference>
<dbReference type="PDB" id="3BCP">
    <property type="method" value="X-ray"/>
    <property type="resolution" value="2.57 A"/>
    <property type="chains" value="A/B/C/D=27-150"/>
</dbReference>
<dbReference type="PDB" id="3DJO">
    <property type="method" value="X-ray"/>
    <property type="resolution" value="1.60 A"/>
    <property type="chains" value="A/B=27-150"/>
</dbReference>
<dbReference type="PDB" id="3DJP">
    <property type="method" value="X-ray"/>
    <property type="resolution" value="1.60 A"/>
    <property type="chains" value="A/B=27-150"/>
</dbReference>
<dbReference type="PDB" id="3DJQ">
    <property type="method" value="X-ray"/>
    <property type="resolution" value="1.53 A"/>
    <property type="chains" value="A/B=27-150"/>
</dbReference>
<dbReference type="PDB" id="3DJV">
    <property type="method" value="X-ray"/>
    <property type="resolution" value="1.60 A"/>
    <property type="chains" value="A/B=27-150"/>
</dbReference>
<dbReference type="PDB" id="3DJX">
    <property type="method" value="X-ray"/>
    <property type="resolution" value="1.69 A"/>
    <property type="chains" value="A/B=27-150"/>
</dbReference>
<dbReference type="PDB" id="4N4C">
    <property type="method" value="X-ray"/>
    <property type="resolution" value="2.48 A"/>
    <property type="chains" value="A/B=27-150"/>
</dbReference>
<dbReference type="PDBsum" id="11BA"/>
<dbReference type="PDBsum" id="11BG"/>
<dbReference type="PDBsum" id="1BSR"/>
<dbReference type="PDBsum" id="1N1X"/>
<dbReference type="PDBsum" id="1N3Z"/>
<dbReference type="PDBsum" id="1QWQ"/>
<dbReference type="PDBsum" id="1R3M"/>
<dbReference type="PDBsum" id="1R5C"/>
<dbReference type="PDBsum" id="1R5D"/>
<dbReference type="PDBsum" id="1TQ9"/>
<dbReference type="PDBsum" id="1Y92"/>
<dbReference type="PDBsum" id="1Y94"/>
<dbReference type="PDBsum" id="2LFJ"/>
<dbReference type="PDBsum" id="3BCM"/>
<dbReference type="PDBsum" id="3BCO"/>
<dbReference type="PDBsum" id="3BCP"/>
<dbReference type="PDBsum" id="3DJO"/>
<dbReference type="PDBsum" id="3DJP"/>
<dbReference type="PDBsum" id="3DJQ"/>
<dbReference type="PDBsum" id="3DJV"/>
<dbReference type="PDBsum" id="3DJX"/>
<dbReference type="PDBsum" id="4N4C"/>
<dbReference type="BMRB" id="P00669"/>
<dbReference type="SMR" id="P00669"/>
<dbReference type="FunCoup" id="P00669">
    <property type="interactions" value="12"/>
</dbReference>
<dbReference type="MINT" id="P00669"/>
<dbReference type="STRING" id="9913.ENSBTAP00000036091"/>
<dbReference type="BindingDB" id="P00669"/>
<dbReference type="ChEMBL" id="CHEMBL1075179"/>
<dbReference type="PaxDb" id="9913-ENSBTAP00000036091"/>
<dbReference type="PeptideAtlas" id="P00669"/>
<dbReference type="Ensembl" id="ENSBTAT00000036229.4">
    <property type="protein sequence ID" value="ENSBTAP00000036091.3"/>
    <property type="gene ID" value="ENSBTAG00000025663.5"/>
</dbReference>
<dbReference type="GeneID" id="280930"/>
<dbReference type="KEGG" id="bta:280930"/>
<dbReference type="VEuPathDB" id="HostDB:ENSBTAG00000025663"/>
<dbReference type="eggNOG" id="ENOG502SQ4K">
    <property type="taxonomic scope" value="Eukaryota"/>
</dbReference>
<dbReference type="GeneTree" id="ENSGT00940000160869"/>
<dbReference type="HOGENOM" id="CLU_117006_0_0_1"/>
<dbReference type="InParanoid" id="P00669"/>
<dbReference type="OMA" id="PCAYRAR"/>
<dbReference type="OrthoDB" id="8573660at2759"/>
<dbReference type="TreeFam" id="TF333393"/>
<dbReference type="BRENDA" id="4.6.1.18">
    <property type="organism ID" value="908"/>
</dbReference>
<dbReference type="SABIO-RK" id="P00669"/>
<dbReference type="EvolutionaryTrace" id="P00669"/>
<dbReference type="PRO" id="PR:P00669"/>
<dbReference type="Proteomes" id="UP000009136">
    <property type="component" value="Chromosome 10"/>
</dbReference>
<dbReference type="Bgee" id="ENSBTAG00000025663">
    <property type="expression patterns" value="Expressed in mammary gland fat and 6 other cell types or tissues"/>
</dbReference>
<dbReference type="GO" id="GO:0005576">
    <property type="term" value="C:extracellular region"/>
    <property type="evidence" value="ECO:0007669"/>
    <property type="project" value="UniProtKB-SubCell"/>
</dbReference>
<dbReference type="GO" id="GO:0042802">
    <property type="term" value="F:identical protein binding"/>
    <property type="evidence" value="ECO:0000353"/>
    <property type="project" value="IntAct"/>
</dbReference>
<dbReference type="GO" id="GO:0016829">
    <property type="term" value="F:lyase activity"/>
    <property type="evidence" value="ECO:0007669"/>
    <property type="project" value="UniProtKB-KW"/>
</dbReference>
<dbReference type="GO" id="GO:0003676">
    <property type="term" value="F:nucleic acid binding"/>
    <property type="evidence" value="ECO:0007669"/>
    <property type="project" value="InterPro"/>
</dbReference>
<dbReference type="GO" id="GO:0004522">
    <property type="term" value="F:ribonuclease A activity"/>
    <property type="evidence" value="ECO:0007669"/>
    <property type="project" value="UniProtKB-EC"/>
</dbReference>
<dbReference type="GO" id="GO:0004540">
    <property type="term" value="F:RNA nuclease activity"/>
    <property type="evidence" value="ECO:0000314"/>
    <property type="project" value="UniProtKB"/>
</dbReference>
<dbReference type="GO" id="GO:0050830">
    <property type="term" value="P:defense response to Gram-positive bacterium"/>
    <property type="evidence" value="ECO:0000318"/>
    <property type="project" value="GO_Central"/>
</dbReference>
<dbReference type="CDD" id="cd06265">
    <property type="entry name" value="RNase_A_canonical"/>
    <property type="match status" value="1"/>
</dbReference>
<dbReference type="FunFam" id="3.10.130.10:FF:000001">
    <property type="entry name" value="Ribonuclease pancreatic"/>
    <property type="match status" value="1"/>
</dbReference>
<dbReference type="Gene3D" id="3.10.130.10">
    <property type="entry name" value="Ribonuclease A-like domain"/>
    <property type="match status" value="1"/>
</dbReference>
<dbReference type="InterPro" id="IPR001427">
    <property type="entry name" value="RNaseA"/>
</dbReference>
<dbReference type="InterPro" id="IPR036816">
    <property type="entry name" value="RNaseA-like_dom_sf"/>
</dbReference>
<dbReference type="InterPro" id="IPR023411">
    <property type="entry name" value="RNaseA_AS"/>
</dbReference>
<dbReference type="InterPro" id="IPR023412">
    <property type="entry name" value="RNaseA_domain"/>
</dbReference>
<dbReference type="PANTHER" id="PTHR11437">
    <property type="entry name" value="RIBONUCLEASE"/>
    <property type="match status" value="1"/>
</dbReference>
<dbReference type="PANTHER" id="PTHR11437:SF24">
    <property type="entry name" value="RIBONUCLEASE PANCREATIC"/>
    <property type="match status" value="1"/>
</dbReference>
<dbReference type="Pfam" id="PF00074">
    <property type="entry name" value="RnaseA"/>
    <property type="match status" value="1"/>
</dbReference>
<dbReference type="PRINTS" id="PR00794">
    <property type="entry name" value="RIBONUCLEASE"/>
</dbReference>
<dbReference type="SMART" id="SM00092">
    <property type="entry name" value="RNAse_Pc"/>
    <property type="match status" value="1"/>
</dbReference>
<dbReference type="SUPFAM" id="SSF54076">
    <property type="entry name" value="RNase A-like"/>
    <property type="match status" value="1"/>
</dbReference>
<dbReference type="PROSITE" id="PS00127">
    <property type="entry name" value="RNASE_PANCREATIC"/>
    <property type="match status" value="1"/>
</dbReference>
<sequence length="150" mass="16377">MALKSLVVLPLLVLVLLLVRVQPSLGKESAAAKFERQHMDSGNSPSSSSNYCNLMMCCRKMTQGKCKPVNTFVHESLADVKAVCSQKKVTCKNGQTNCYQSKSTMRITDCRETGSSKYPNCAYKTTQVEKHIIVACGGKPSVPVHFDASV</sequence>
<name>RNS_BOVIN</name>
<accession>P00669</accession>
<gene>
    <name type="primary">SRN</name>
</gene>
<organism>
    <name type="scientific">Bos taurus</name>
    <name type="common">Bovine</name>
    <dbReference type="NCBI Taxonomy" id="9913"/>
    <lineage>
        <taxon>Eukaryota</taxon>
        <taxon>Metazoa</taxon>
        <taxon>Chordata</taxon>
        <taxon>Craniata</taxon>
        <taxon>Vertebrata</taxon>
        <taxon>Euteleostomi</taxon>
        <taxon>Mammalia</taxon>
        <taxon>Eutheria</taxon>
        <taxon>Laurasiatheria</taxon>
        <taxon>Artiodactyla</taxon>
        <taxon>Ruminantia</taxon>
        <taxon>Pecora</taxon>
        <taxon>Bovidae</taxon>
        <taxon>Bovinae</taxon>
        <taxon>Bos</taxon>
    </lineage>
</organism>
<protein>
    <recommendedName>
        <fullName>Seminal ribonuclease</fullName>
        <shortName>S-RNase</shortName>
        <shortName>Seminal RNase</shortName>
        <ecNumber evidence="2">4.6.1.18</ecNumber>
    </recommendedName>
    <alternativeName>
        <fullName>Ribonuclease BS-1</fullName>
    </alternativeName>
</protein>
<feature type="signal peptide" evidence="3">
    <location>
        <begin position="1"/>
        <end position="26"/>
    </location>
</feature>
<feature type="chain" id="PRO_0000030910" description="Seminal ribonuclease">
    <location>
        <begin position="27"/>
        <end position="150"/>
    </location>
</feature>
<feature type="active site" description="Proton acceptor">
    <location>
        <position position="38"/>
    </location>
</feature>
<feature type="active site" description="Proton donor">
    <location>
        <position position="145"/>
    </location>
</feature>
<feature type="binding site">
    <location>
        <position position="33"/>
    </location>
    <ligand>
        <name>substrate</name>
    </ligand>
</feature>
<feature type="binding site">
    <location>
        <position position="36"/>
    </location>
    <ligand>
        <name>substrate</name>
    </ligand>
</feature>
<feature type="binding site">
    <location>
        <begin position="67"/>
        <end position="71"/>
    </location>
    <ligand>
        <name>substrate</name>
    </ligand>
</feature>
<feature type="binding site">
    <location>
        <position position="92"/>
    </location>
    <ligand>
        <name>substrate</name>
    </ligand>
</feature>
<feature type="binding site">
    <location>
        <position position="111"/>
    </location>
    <ligand>
        <name>substrate</name>
    </ligand>
</feature>
<feature type="modified residue" description="Deamidated asparagine; by deterioration" evidence="1">
    <location>
        <position position="93"/>
    </location>
</feature>
<feature type="disulfide bond">
    <location>
        <begin position="52"/>
        <end position="110"/>
    </location>
</feature>
<feature type="disulfide bond" description="Interchain">
    <location>
        <position position="57"/>
    </location>
</feature>
<feature type="disulfide bond" description="Interchain">
    <location>
        <position position="58"/>
    </location>
</feature>
<feature type="disulfide bond">
    <location>
        <begin position="66"/>
        <end position="121"/>
    </location>
</feature>
<feature type="disulfide bond">
    <location>
        <begin position="84"/>
        <end position="136"/>
    </location>
</feature>
<feature type="disulfide bond">
    <location>
        <begin position="91"/>
        <end position="98"/>
    </location>
</feature>
<feature type="helix" evidence="5">
    <location>
        <begin position="30"/>
        <end position="38"/>
    </location>
</feature>
<feature type="helix" evidence="6">
    <location>
        <begin position="48"/>
        <end position="50"/>
    </location>
</feature>
<feature type="helix" evidence="5">
    <location>
        <begin position="51"/>
        <end position="58"/>
    </location>
</feature>
<feature type="turn" evidence="5">
    <location>
        <begin position="59"/>
        <end position="62"/>
    </location>
</feature>
<feature type="strand" evidence="5">
    <location>
        <begin position="63"/>
        <end position="65"/>
    </location>
</feature>
<feature type="strand" evidence="5">
    <location>
        <begin position="68"/>
        <end position="73"/>
    </location>
</feature>
<feature type="helix" evidence="5">
    <location>
        <begin position="77"/>
        <end position="81"/>
    </location>
</feature>
<feature type="helix" evidence="5">
    <location>
        <begin position="82"/>
        <end position="85"/>
    </location>
</feature>
<feature type="strand" evidence="5">
    <location>
        <begin position="86"/>
        <end position="89"/>
    </location>
</feature>
<feature type="strand" evidence="7">
    <location>
        <begin position="92"/>
        <end position="94"/>
    </location>
</feature>
<feature type="strand" evidence="5">
    <location>
        <begin position="98"/>
        <end position="100"/>
    </location>
</feature>
<feature type="strand" evidence="5">
    <location>
        <begin position="105"/>
        <end position="112"/>
    </location>
</feature>
<feature type="strand" evidence="5">
    <location>
        <begin position="123"/>
        <end position="137"/>
    </location>
</feature>
<feature type="turn" evidence="5">
    <location>
        <begin position="138"/>
        <end position="141"/>
    </location>
</feature>
<feature type="strand" evidence="5">
    <location>
        <begin position="142"/>
        <end position="150"/>
    </location>
</feature>
<proteinExistence type="evidence at protein level"/>
<comment type="function">
    <text>This enzyme hydrolyzes both single- and double-stranded RNA.</text>
</comment>
<comment type="catalytic activity">
    <reaction evidence="2">
        <text>an [RNA] containing cytidine + H2O = an [RNA]-3'-cytidine-3'-phosphate + a 5'-hydroxy-ribonucleotide-3'-[RNA].</text>
        <dbReference type="EC" id="4.6.1.18"/>
    </reaction>
</comment>
<comment type="catalytic activity">
    <reaction evidence="2">
        <text>an [RNA] containing uridine + H2O = an [RNA]-3'-uridine-3'-phosphate + a 5'-hydroxy-ribonucleotide-3'-[RNA].</text>
        <dbReference type="EC" id="4.6.1.18"/>
    </reaction>
</comment>
<comment type="activity regulation">
    <text>Allosteric regulation by both substrate and reaction products.</text>
</comment>
<comment type="subunit">
    <text>Homodimer; disulfide-linked.</text>
</comment>
<comment type="interaction">
    <interactant intactId="EBI-8524799">
        <id>P00669</id>
    </interactant>
    <interactant intactId="EBI-8524799">
        <id>P00669</id>
        <label>SRN</label>
    </interactant>
    <organismsDiffer>false</organismsDiffer>
    <experiments>7</experiments>
</comment>
<comment type="subcellular location">
    <subcellularLocation>
        <location>Secreted</location>
    </subcellularLocation>
</comment>
<comment type="tissue specificity">
    <text>Seminal plasma. Can reach 3% of the protein content of this fluid.</text>
</comment>
<comment type="miscellaneous">
    <text evidence="1">Progressive deamidation of Asn-93 transforms the homodimer (beta- 2) into and heterodimer (alpha-beta) and finally a doubly deamidated dimer (alpha-2).</text>
</comment>
<comment type="similarity">
    <text evidence="4">Belongs to the pancreatic ribonuclease family.</text>
</comment>